<feature type="initiator methionine" description="Removed; by host" evidence="1">
    <location>
        <position position="1"/>
    </location>
</feature>
<feature type="chain" id="PRO_0000115929" description="Cytoplasmic envelopment protein 3" evidence="1">
    <location>
        <begin position="2"/>
        <end position="77"/>
    </location>
</feature>
<feature type="lipid moiety-binding region" description="N-myristoyl glycine; by host" evidence="1">
    <location>
        <position position="2"/>
    </location>
</feature>
<name>CEP3_HHV6U</name>
<accession>P24448</accession>
<gene>
    <name type="primary">U71</name>
    <name type="synonym">17R</name>
</gene>
<comment type="function">
    <text evidence="1">Plays an important role in the cytoplasmic envelopment of tegument proteins and capsids during the assembly and egress processes. Also participates in viral entry at the fusion step probably by regulating the core fusion machinery.</text>
</comment>
<comment type="subunit">
    <text evidence="1">Interacts with cytoplasmic envelopment protein 2; this interaction is essential for the proper localization of each protein to the assembly complex and thus for the production of infectious virus.</text>
</comment>
<comment type="subcellular location">
    <subcellularLocation>
        <location evidence="1">Virion tegument</location>
    </subcellularLocation>
    <subcellularLocation>
        <location evidence="1">Virion membrane</location>
        <topology evidence="1">Lipid-anchor</topology>
    </subcellularLocation>
    <subcellularLocation>
        <location evidence="1">Host cell membrane</location>
        <topology evidence="1">Lipid-anchor</topology>
        <orientation evidence="1">Cytoplasmic side</orientation>
    </subcellularLocation>
    <subcellularLocation>
        <location evidence="1">Host Golgi apparatus membrane</location>
        <topology evidence="1">Lipid-anchor</topology>
        <orientation evidence="1">Cytoplasmic side</orientation>
    </subcellularLocation>
    <text evidence="1">Virion membrane-associated tegument protein. Associates with host membrane lipids rafts. During virion morphogenesis, this protein probably accumulates in the endosomes and trans-Golgi where secondary envelopment occurs. It is probably transported to the cell surface from where it is endocytosed and directed to the trans-Golgi network (TGN).</text>
</comment>
<comment type="PTM">
    <text evidence="1">Myristoylation and palmitoylation (probably on one or more of the nearby cysteines at the N-terminus) enable membrane-binding and Golgi apparatus-specific targeting and are essential for efficient packaging.</text>
</comment>
<comment type="PTM">
    <text evidence="1">Phosphorylated. Phosphorylation does not seem to be required for recycling to the host Golgi apparatus. Packaging is selective for underphosphorylated forms.</text>
</comment>
<comment type="similarity">
    <text evidence="1">Belongs to the herpesviridae cytoplasmic envelopment protein 3 family.</text>
</comment>
<dbReference type="EMBL" id="X83413">
    <property type="protein sequence ID" value="CAA58363.1"/>
    <property type="molecule type" value="Genomic_DNA"/>
</dbReference>
<dbReference type="EMBL" id="M68963">
    <property type="protein sequence ID" value="AAA65579.1"/>
    <property type="molecule type" value="Genomic_DNA"/>
</dbReference>
<dbReference type="PIR" id="G36769">
    <property type="entry name" value="G36769"/>
</dbReference>
<dbReference type="RefSeq" id="NP_042964.1">
    <property type="nucleotide sequence ID" value="NC_001664.2"/>
</dbReference>
<dbReference type="IntAct" id="P24448">
    <property type="interactions" value="1"/>
</dbReference>
<dbReference type="DNASU" id="1487952"/>
<dbReference type="GeneID" id="1487952"/>
<dbReference type="KEGG" id="vg:1487952"/>
<dbReference type="Proteomes" id="UP000009295">
    <property type="component" value="Segment"/>
</dbReference>
<dbReference type="GO" id="GO:0044178">
    <property type="term" value="C:host cell Golgi membrane"/>
    <property type="evidence" value="ECO:0007669"/>
    <property type="project" value="UniProtKB-SubCell"/>
</dbReference>
<dbReference type="GO" id="GO:0020002">
    <property type="term" value="C:host cell plasma membrane"/>
    <property type="evidence" value="ECO:0007669"/>
    <property type="project" value="UniProtKB-SubCell"/>
</dbReference>
<dbReference type="GO" id="GO:0016020">
    <property type="term" value="C:membrane"/>
    <property type="evidence" value="ECO:0007669"/>
    <property type="project" value="UniProtKB-KW"/>
</dbReference>
<dbReference type="GO" id="GO:0019033">
    <property type="term" value="C:viral tegument"/>
    <property type="evidence" value="ECO:0007669"/>
    <property type="project" value="UniProtKB-SubCell"/>
</dbReference>
<dbReference type="GO" id="GO:0055036">
    <property type="term" value="C:virion membrane"/>
    <property type="evidence" value="ECO:0007669"/>
    <property type="project" value="UniProtKB-SubCell"/>
</dbReference>
<dbReference type="GO" id="GO:0046760">
    <property type="term" value="P:viral budding from Golgi membrane"/>
    <property type="evidence" value="ECO:0007669"/>
    <property type="project" value="UniProtKB-UniRule"/>
</dbReference>
<dbReference type="HAMAP" id="MF_04041">
    <property type="entry name" value="HSV_CEP3_betahv"/>
    <property type="match status" value="1"/>
</dbReference>
<dbReference type="InterPro" id="IPR020170">
    <property type="entry name" value="Herpes_UL11_megaloV/roseoloV"/>
</dbReference>
<dbReference type="InterPro" id="IPR034705">
    <property type="entry name" value="HSV_CEP3_betahv"/>
</dbReference>
<dbReference type="Pfam" id="PF17474">
    <property type="entry name" value="U71"/>
    <property type="match status" value="1"/>
</dbReference>
<reference key="1">
    <citation type="journal article" date="1990" name="J. Virol.">
        <title>Human herpesvirus 6 is closely related to human cytomegalovirus.</title>
        <authorList>
            <person name="Lawrence G.L."/>
            <person name="Chee M."/>
            <person name="Craxton M.A."/>
            <person name="Gompels U.A."/>
            <person name="Honess R.W."/>
            <person name="Barrell B.G."/>
        </authorList>
    </citation>
    <scope>NUCLEOTIDE SEQUENCE [GENOMIC DNA]</scope>
</reference>
<reference key="2">
    <citation type="journal article" date="1995" name="Virology">
        <title>The DNA sequence of human herpesvirus-6: structure, coding content, and genome evolution.</title>
        <authorList>
            <person name="Gompels U.A."/>
            <person name="Nicholas J."/>
            <person name="Lawrence G.L."/>
            <person name="Jones M."/>
            <person name="Thomson B.J."/>
            <person name="Martin M.E.D."/>
            <person name="Efstathiou S."/>
            <person name="Craxton M.A."/>
            <person name="Macaulay H.A."/>
        </authorList>
    </citation>
    <scope>NUCLEOTIDE SEQUENCE [LARGE SCALE GENOMIC DNA]</scope>
</reference>
<sequence>MGAKCCKPVSCGMCKKTENTLIDYKGNPILLANEFTVLTDTESEEEGMADLEKPLLEKVVAKCDTEAEKKLPCKSKK</sequence>
<protein>
    <recommendedName>
        <fullName evidence="1">Cytoplasmic envelopment protein 3</fullName>
    </recommendedName>
</protein>
<proteinExistence type="inferred from homology"/>
<keyword id="KW-1032">Host cell membrane</keyword>
<keyword id="KW-1040">Host Golgi apparatus</keyword>
<keyword id="KW-1043">Host membrane</keyword>
<keyword id="KW-0449">Lipoprotein</keyword>
<keyword id="KW-0472">Membrane</keyword>
<keyword id="KW-0519">Myristate</keyword>
<keyword id="KW-0564">Palmitate</keyword>
<keyword id="KW-0597">Phosphoprotein</keyword>
<keyword id="KW-1185">Reference proteome</keyword>
<keyword id="KW-0946">Virion</keyword>
<keyword id="KW-0920">Virion tegument</keyword>
<organism>
    <name type="scientific">Human herpesvirus 6A (strain Uganda-1102)</name>
    <name type="common">HHV-6 variant A</name>
    <name type="synonym">Human B lymphotropic virus</name>
    <dbReference type="NCBI Taxonomy" id="10370"/>
    <lineage>
        <taxon>Viruses</taxon>
        <taxon>Duplodnaviria</taxon>
        <taxon>Heunggongvirae</taxon>
        <taxon>Peploviricota</taxon>
        <taxon>Herviviricetes</taxon>
        <taxon>Herpesvirales</taxon>
        <taxon>Orthoherpesviridae</taxon>
        <taxon>Betaherpesvirinae</taxon>
        <taxon>Roseolovirus</taxon>
        <taxon>Roseolovirus humanbeta6a</taxon>
        <taxon>Human betaherpesvirus 6A</taxon>
    </lineage>
</organism>
<evidence type="ECO:0000255" key="1">
    <source>
        <dbReference type="HAMAP-Rule" id="MF_04041"/>
    </source>
</evidence>
<organismHost>
    <name type="scientific">Homo sapiens</name>
    <name type="common">Human</name>
    <dbReference type="NCBI Taxonomy" id="9606"/>
</organismHost>